<organism evidence="11">
    <name type="scientific">Tribolium castaneum</name>
    <name type="common">Red flour beetle</name>
    <dbReference type="NCBI Taxonomy" id="7070"/>
    <lineage>
        <taxon>Eukaryota</taxon>
        <taxon>Metazoa</taxon>
        <taxon>Ecdysozoa</taxon>
        <taxon>Arthropoda</taxon>
        <taxon>Hexapoda</taxon>
        <taxon>Insecta</taxon>
        <taxon>Pterygota</taxon>
        <taxon>Neoptera</taxon>
        <taxon>Endopterygota</taxon>
        <taxon>Coleoptera</taxon>
        <taxon>Polyphaga</taxon>
        <taxon>Cucujiformia</taxon>
        <taxon>Tenebrionidae</taxon>
        <taxon>Tenebrionidae incertae sedis</taxon>
        <taxon>Tribolium</taxon>
    </lineage>
</organism>
<accession>D6WMZ8</accession>
<accession>D7US45</accession>
<dbReference type="EC" id="3.1.1.59" evidence="7"/>
<dbReference type="EMBL" id="AB542179">
    <property type="protein sequence ID" value="BAJ10675.1"/>
    <property type="molecule type" value="mRNA"/>
</dbReference>
<dbReference type="EMBL" id="AB542180">
    <property type="protein sequence ID" value="BAJ10676.1"/>
    <property type="molecule type" value="mRNA"/>
</dbReference>
<dbReference type="EMBL" id="AB542181">
    <property type="protein sequence ID" value="BAJ10677.1"/>
    <property type="molecule type" value="mRNA"/>
</dbReference>
<dbReference type="EMBL" id="AB542182">
    <property type="protein sequence ID" value="BAJ10678.1"/>
    <property type="molecule type" value="mRNA"/>
</dbReference>
<dbReference type="EMBL" id="AB542183">
    <property type="protein sequence ID" value="BAJ10679.1"/>
    <property type="molecule type" value="mRNA"/>
</dbReference>
<dbReference type="EMBL" id="KQ971343">
    <property type="protein sequence ID" value="EFA03259.2"/>
    <property type="molecule type" value="Genomic_DNA"/>
</dbReference>
<dbReference type="RefSeq" id="NP_001180223.1">
    <property type="nucleotide sequence ID" value="NM_001193294.1"/>
</dbReference>
<dbReference type="RefSeq" id="XP_015835613.1">
    <property type="nucleotide sequence ID" value="XM_015980127.2"/>
</dbReference>
<dbReference type="RefSeq" id="XP_015835614.1">
    <property type="nucleotide sequence ID" value="XM_015980128.2"/>
</dbReference>
<dbReference type="RefSeq" id="XP_015835615.1">
    <property type="nucleotide sequence ID" value="XM_015980129.1"/>
</dbReference>
<dbReference type="RefSeq" id="XP_015835616.1">
    <property type="nucleotide sequence ID" value="XM_015980130.1"/>
</dbReference>
<dbReference type="RefSeq" id="XP_064212595.1">
    <property type="nucleotide sequence ID" value="XM_064356525.1"/>
</dbReference>
<dbReference type="RefSeq" id="XP_064212596.1">
    <property type="nucleotide sequence ID" value="XM_064356526.1"/>
</dbReference>
<dbReference type="RefSeq" id="XP_064212597.1">
    <property type="nucleotide sequence ID" value="XM_064356527.1"/>
</dbReference>
<dbReference type="SMR" id="D6WMZ8"/>
<dbReference type="FunCoup" id="D6WMZ8">
    <property type="interactions" value="35"/>
</dbReference>
<dbReference type="STRING" id="7070.D6WMZ8"/>
<dbReference type="ESTHER" id="trica-d7us45">
    <property type="family name" value="Juvenile_hormone_esterase"/>
</dbReference>
<dbReference type="GlyCosmos" id="D6WMZ8">
    <property type="glycosylation" value="6 sites, No reported glycans"/>
</dbReference>
<dbReference type="EnsemblMetazoa" id="TC013193_001">
    <property type="protein sequence ID" value="TC013193_001"/>
    <property type="gene ID" value="TC013193"/>
</dbReference>
<dbReference type="GeneID" id="658208"/>
<dbReference type="KEGG" id="tca:658208"/>
<dbReference type="CTD" id="658208"/>
<dbReference type="eggNOG" id="KOG1516">
    <property type="taxonomic scope" value="Eukaryota"/>
</dbReference>
<dbReference type="HOGENOM" id="CLU_006586_13_2_1"/>
<dbReference type="InParanoid" id="D6WMZ8"/>
<dbReference type="OMA" id="KMALEWI"/>
<dbReference type="OrthoDB" id="19653at2759"/>
<dbReference type="BRENDA" id="3.1.1.59">
    <property type="organism ID" value="6437"/>
</dbReference>
<dbReference type="Proteomes" id="UP000007266">
    <property type="component" value="Linkage group 5"/>
</dbReference>
<dbReference type="GO" id="GO:0005576">
    <property type="term" value="C:extracellular region"/>
    <property type="evidence" value="ECO:0007669"/>
    <property type="project" value="UniProtKB-SubCell"/>
</dbReference>
<dbReference type="GO" id="GO:0004453">
    <property type="term" value="F:juvenile-hormone esterase activity"/>
    <property type="evidence" value="ECO:0007669"/>
    <property type="project" value="UniProtKB-EC"/>
</dbReference>
<dbReference type="FunFam" id="3.40.50.1820:FF:000155">
    <property type="entry name" value="Carboxylic ester hydrolase"/>
    <property type="match status" value="1"/>
</dbReference>
<dbReference type="Gene3D" id="3.40.50.1820">
    <property type="entry name" value="alpha/beta hydrolase"/>
    <property type="match status" value="1"/>
</dbReference>
<dbReference type="InterPro" id="IPR029058">
    <property type="entry name" value="AB_hydrolase_fold"/>
</dbReference>
<dbReference type="InterPro" id="IPR002018">
    <property type="entry name" value="CarbesteraseB"/>
</dbReference>
<dbReference type="InterPro" id="IPR019826">
    <property type="entry name" value="Carboxylesterase_B_AS"/>
</dbReference>
<dbReference type="InterPro" id="IPR019819">
    <property type="entry name" value="Carboxylesterase_B_CS"/>
</dbReference>
<dbReference type="InterPro" id="IPR050309">
    <property type="entry name" value="Type-B_Carboxylest/Lipase"/>
</dbReference>
<dbReference type="PANTHER" id="PTHR11559">
    <property type="entry name" value="CARBOXYLESTERASE"/>
    <property type="match status" value="1"/>
</dbReference>
<dbReference type="Pfam" id="PF00135">
    <property type="entry name" value="COesterase"/>
    <property type="match status" value="1"/>
</dbReference>
<dbReference type="SUPFAM" id="SSF53474">
    <property type="entry name" value="alpha/beta-Hydrolases"/>
    <property type="match status" value="1"/>
</dbReference>
<dbReference type="PROSITE" id="PS00122">
    <property type="entry name" value="CARBOXYLESTERASE_B_1"/>
    <property type="match status" value="1"/>
</dbReference>
<dbReference type="PROSITE" id="PS00941">
    <property type="entry name" value="CARBOXYLESTERASE_B_2"/>
    <property type="match status" value="1"/>
</dbReference>
<sequence length="588" mass="65853">MKFPKNLFLVLFYTSWKFCDVCAYTPSHPLVYTKYGSVIGSVEYSRNSRAYMSFKGIPFAKPPVGDLRFKAPEPPEPWNFSINGTKDAPFCIQKNYFFSNPKVEGSEDCLYLNVYVPKTEGSQLLPVMVFIHWGGFFAGRGSSDYIGPEYIMDKDVILVTFNYRLGVFGFLSTLDDNAPGNFGLKDQVMALKFVHENIECFGGDNNRVTIFGQSAGSGSVNLHLISPASRGLFQQAISQSGAALDLWARPLNALQPNVTAALAAFTGCSAHIGSSKDIVDCLRKIEATKLAETADNFKYFSIEPLTPYSMVTEKQTDANPNPFLVQDPLESLKAGAFMKIPWMVGSVQDEGILRAAPLIRQPETLQTLNSNFEKLITQMLFLQFSAGANASSLLKNMTDFYLGGKSLIDVNNPKSVQGFINLYGDRAFHYGIYQTVILQLRKGHKPIWMYNFNYKGQYSYGDKFAATDKNVNFTWGVSHCDDLLYLFKSPGLFANLQKDNDILMSKTMVSFWTNFAIYGNPDPHQNLNWNSLNFEKPEGVKVADLNIMHITGNHETGKIAFDVEKSQILDRIAFWAKQSLLENFPDFG</sequence>
<keyword id="KW-1015">Disulfide bond</keyword>
<keyword id="KW-0325">Glycoprotein</keyword>
<keyword id="KW-0378">Hydrolase</keyword>
<keyword id="KW-1185">Reference proteome</keyword>
<keyword id="KW-0964">Secreted</keyword>
<keyword id="KW-0719">Serine esterase</keyword>
<keyword id="KW-0732">Signal</keyword>
<gene>
    <name evidence="8" type="primary">Tcjhe</name>
    <name evidence="11" type="ORF">TcasGA2_TC013193</name>
</gene>
<comment type="function">
    <text evidence="7">May function as a juvenile hormone (JH)-specific degradation enzyme in vivo decreasing JH activity. Hydrolyzes JH III in vitro. Hydrolyzes effectively also methyl hepthylthioacetothioate (HEPTAT), a synthetic substrate. Of the general esterase substrates, it has preference for 2-naphthyl acetate (2-NA) and shows a weak activity for 1-NA and 4-nitrophenylacetate (4-NPA).</text>
</comment>
<comment type="catalytic activity">
    <reaction evidence="7">
        <text>juvenile hormone III + H2O = juvenile hormone III carboxylate + methanol + H(+)</text>
        <dbReference type="Rhea" id="RHEA:46912"/>
        <dbReference type="ChEBI" id="CHEBI:15377"/>
        <dbReference type="ChEBI" id="CHEBI:15378"/>
        <dbReference type="ChEBI" id="CHEBI:17790"/>
        <dbReference type="ChEBI" id="CHEBI:27493"/>
        <dbReference type="ChEBI" id="CHEBI:83274"/>
        <dbReference type="EC" id="3.1.1.59"/>
    </reaction>
</comment>
<comment type="activity regulation">
    <text evidence="7">Inhibited by 3-octylthio-1,1,1-trifluoro-2-propanone (OTFP), a specific inhibitor of juvenile hormone esterase (JHE), but not by diisopropyl fluorophosphate (DFP), a serine enzyme inhibitor.</text>
</comment>
<comment type="biophysicochemical properties">
    <kinetics>
        <KM evidence="7">657 nM for juvenile hormone (JH) III</KM>
        <text evidence="7">kcat is 0.164 sec(-1) for JH III.</text>
    </kinetics>
</comment>
<comment type="subcellular location">
    <subcellularLocation>
        <location evidence="7">Secreted</location>
    </subcellularLocation>
</comment>
<comment type="developmental stage">
    <text evidence="7">Low expression in first to third larval instars, but substantially higher expression levels detected at the beginning of the sixth (penultimate) instars. Strongly expressed in seventh (final) instar larvae. High levels of expression are detected on the final day of pupal development in both males and females. On the seventh day of adult life, the levels in females are greater than those in males by a factor of more than three.</text>
</comment>
<comment type="similarity">
    <text evidence="6">Belongs to the type-B carboxylesterase/lipase family.</text>
</comment>
<feature type="signal peptide" evidence="3">
    <location>
        <begin position="1"/>
        <end position="23"/>
    </location>
</feature>
<feature type="chain" id="PRO_5007230847" description="Juvenile hormone esterase" evidence="3">
    <location>
        <begin position="24"/>
        <end position="588"/>
    </location>
</feature>
<feature type="active site" description="Acyl-ester intermediate" evidence="5">
    <location>
        <position position="214"/>
    </location>
</feature>
<feature type="active site" description="Charge relay system" evidence="2">
    <location>
        <position position="350"/>
    </location>
</feature>
<feature type="active site" description="Charge relay system" evidence="2">
    <location>
        <position position="479"/>
    </location>
</feature>
<feature type="glycosylation site" description="N-linked (GlcNAc...) asparagine" evidence="4">
    <location>
        <position position="79"/>
    </location>
</feature>
<feature type="glycosylation site" description="N-linked (GlcNAc...) asparagine" evidence="4">
    <location>
        <position position="83"/>
    </location>
</feature>
<feature type="glycosylation site" description="N-linked (GlcNAc...) asparagine" evidence="4">
    <location>
        <position position="257"/>
    </location>
</feature>
<feature type="glycosylation site" description="N-linked (GlcNAc...) asparagine" evidence="4">
    <location>
        <position position="389"/>
    </location>
</feature>
<feature type="glycosylation site" description="N-linked (GlcNAc...) asparagine" evidence="4">
    <location>
        <position position="396"/>
    </location>
</feature>
<feature type="glycosylation site" description="N-linked (GlcNAc...) asparagine" evidence="4">
    <location>
        <position position="472"/>
    </location>
</feature>
<feature type="disulfide bond" evidence="1">
    <location>
        <begin position="91"/>
        <end position="109"/>
    </location>
</feature>
<feature type="disulfide bond" evidence="1">
    <location>
        <begin position="268"/>
        <end position="281"/>
    </location>
</feature>
<feature type="sequence conflict" description="In Ref. 1; BAJ10675/BAJ10676/BAJ10677/BAJ10678/BAJ10679." evidence="9" ref="1">
    <original>N</original>
    <variation>T</variation>
    <location>
        <position position="6"/>
    </location>
</feature>
<feature type="sequence conflict" description="In Ref. 1; BAJ10675/BAJ10676/BAJ10677/BAJ10678/BAJ10679." evidence="9" ref="1">
    <original>I</original>
    <variation>N</variation>
    <location>
        <position position="146"/>
    </location>
</feature>
<evidence type="ECO:0000250" key="1">
    <source>
        <dbReference type="UniProtKB" id="P12337"/>
    </source>
</evidence>
<evidence type="ECO:0000250" key="2">
    <source>
        <dbReference type="UniProtKB" id="P23141"/>
    </source>
</evidence>
<evidence type="ECO:0000255" key="3"/>
<evidence type="ECO:0000255" key="4">
    <source>
        <dbReference type="PROSITE-ProRule" id="PRU00498"/>
    </source>
</evidence>
<evidence type="ECO:0000255" key="5">
    <source>
        <dbReference type="PROSITE-ProRule" id="PRU10039"/>
    </source>
</evidence>
<evidence type="ECO:0000255" key="6">
    <source>
        <dbReference type="RuleBase" id="RU361235"/>
    </source>
</evidence>
<evidence type="ECO:0000269" key="7">
    <source>
    </source>
</evidence>
<evidence type="ECO:0000303" key="8">
    <source>
    </source>
</evidence>
<evidence type="ECO:0000305" key="9"/>
<evidence type="ECO:0000312" key="10">
    <source>
        <dbReference type="EMBL" id="BAJ10675.1"/>
    </source>
</evidence>
<evidence type="ECO:0000312" key="11">
    <source>
        <dbReference type="EMBL" id="EFA03259.2"/>
    </source>
</evidence>
<evidence type="ECO:0000312" key="12">
    <source>
        <dbReference type="Proteomes" id="UP000007266"/>
    </source>
</evidence>
<name>ESTJ_TRICA</name>
<reference evidence="10" key="1">
    <citation type="journal article" date="2010" name="Insect Mol. Biol.">
        <title>Molecular characterization of a gene encoding juvenile hormone esterase in the red flour beetle, Tribolium castaneum.</title>
        <authorList>
            <person name="Tsubota T."/>
            <person name="Minakuchi C."/>
            <person name="Nakakura T."/>
            <person name="Shinoda T."/>
            <person name="Shiotsuki T."/>
        </authorList>
    </citation>
    <scope>NUCLEOTIDE SEQUENCE [MRNA]</scope>
    <scope>FUNCTION</scope>
    <scope>CATALYTIC ACTIVITY</scope>
    <scope>ACTIVITY REGULATION</scope>
    <scope>BIOPHYSICOCHEMICAL PROPERTIES</scope>
    <scope>SUBCELLULAR LOCATION</scope>
    <scope>DEVELOPMENTAL STAGE</scope>
</reference>
<reference evidence="11 12" key="2">
    <citation type="journal article" date="2008" name="Nature">
        <title>The genome of the model beetle and pest Tribolium castaneum.</title>
        <authorList>
            <consortium name="Tribolium Genome Sequencing Consortium"/>
            <person name="Richards S."/>
            <person name="Gibbs R.A."/>
            <person name="Weinstock G.M."/>
            <person name="Brown S.J."/>
            <person name="Denell R."/>
            <person name="Beeman R.W."/>
            <person name="Gibbs R."/>
            <person name="Beeman R.W."/>
            <person name="Brown S.J."/>
            <person name="Bucher G."/>
            <person name="Friedrich M."/>
            <person name="Grimmelikhuijzen C.J."/>
            <person name="Klingler M."/>
            <person name="Lorenzen M."/>
            <person name="Richards S."/>
            <person name="Roth S."/>
            <person name="Schroder R."/>
            <person name="Tautz D."/>
            <person name="Zdobnov E.M."/>
            <person name="Muzny D."/>
            <person name="Gibbs R.A."/>
            <person name="Weinstock G.M."/>
            <person name="Attaway T."/>
            <person name="Bell S."/>
            <person name="Buhay C.J."/>
            <person name="Chandrabose M.N."/>
            <person name="Chavez D."/>
            <person name="Clerk-Blankenburg K.P."/>
            <person name="Cree A."/>
            <person name="Dao M."/>
            <person name="Davis C."/>
            <person name="Chacko J."/>
            <person name="Dinh H."/>
            <person name="Dugan-Rocha S."/>
            <person name="Fowler G."/>
            <person name="Garner T.T."/>
            <person name="Garnes J."/>
            <person name="Gnirke A."/>
            <person name="Hawes A."/>
            <person name="Hernandez J."/>
            <person name="Hines S."/>
            <person name="Holder M."/>
            <person name="Hume J."/>
            <person name="Jhangiani S.N."/>
            <person name="Joshi V."/>
            <person name="Khan Z.M."/>
            <person name="Jackson L."/>
            <person name="Kovar C."/>
            <person name="Kowis A."/>
            <person name="Lee S."/>
            <person name="Lewis L.R."/>
            <person name="Margolis J."/>
            <person name="Morgan M."/>
            <person name="Nazareth L.V."/>
            <person name="Nguyen N."/>
            <person name="Okwuonu G."/>
            <person name="Parker D."/>
            <person name="Richards S."/>
            <person name="Ruiz S.J."/>
            <person name="Santibanez J."/>
            <person name="Savard J."/>
            <person name="Scherer S.E."/>
            <person name="Schneider B."/>
            <person name="Sodergren E."/>
            <person name="Tautz D."/>
            <person name="Vattahil S."/>
            <person name="Villasana D."/>
            <person name="White C.S."/>
            <person name="Wright R."/>
            <person name="Park Y."/>
            <person name="Beeman R.W."/>
            <person name="Lord J."/>
            <person name="Oppert B."/>
            <person name="Lorenzen M."/>
            <person name="Brown S."/>
            <person name="Wang L."/>
            <person name="Savard J."/>
            <person name="Tautz D."/>
            <person name="Richards S."/>
            <person name="Weinstock G."/>
            <person name="Gibbs R.A."/>
            <person name="Liu Y."/>
            <person name="Worley K."/>
            <person name="Weinstock G."/>
            <person name="Elsik C.G."/>
            <person name="Reese J.T."/>
            <person name="Elhaik E."/>
            <person name="Landan G."/>
            <person name="Graur D."/>
            <person name="Arensburger P."/>
            <person name="Atkinson P."/>
            <person name="Beeman R.W."/>
            <person name="Beidler J."/>
            <person name="Brown S.J."/>
            <person name="Demuth J.P."/>
            <person name="Drury D.W."/>
            <person name="Du Y.Z."/>
            <person name="Fujiwara H."/>
            <person name="Lorenzen M."/>
            <person name="Maselli V."/>
            <person name="Osanai M."/>
            <person name="Park Y."/>
            <person name="Robertson H.M."/>
            <person name="Tu Z."/>
            <person name="Wang J.J."/>
            <person name="Wang S."/>
            <person name="Richards S."/>
            <person name="Song H."/>
            <person name="Zhang L."/>
            <person name="Sodergren E."/>
            <person name="Werner D."/>
            <person name="Stanke M."/>
            <person name="Morgenstern B."/>
            <person name="Solovyev V."/>
            <person name="Kosarev P."/>
            <person name="Brown G."/>
            <person name="Chen H.C."/>
            <person name="Ermolaeva O."/>
            <person name="Hlavina W."/>
            <person name="Kapustin Y."/>
            <person name="Kiryutin B."/>
            <person name="Kitts P."/>
            <person name="Maglott D."/>
            <person name="Pruitt K."/>
            <person name="Sapojnikov V."/>
            <person name="Souvorov A."/>
            <person name="Mackey A.J."/>
            <person name="Waterhouse R.M."/>
            <person name="Wyder S."/>
            <person name="Zdobnov E.M."/>
            <person name="Zdobnov E.M."/>
            <person name="Wyder S."/>
            <person name="Kriventseva E.V."/>
            <person name="Kadowaki T."/>
            <person name="Bork P."/>
            <person name="Aranda M."/>
            <person name="Bao R."/>
            <person name="Beermann A."/>
            <person name="Berns N."/>
            <person name="Bolognesi R."/>
            <person name="Bonneton F."/>
            <person name="Bopp D."/>
            <person name="Brown S.J."/>
            <person name="Bucher G."/>
            <person name="Butts T."/>
            <person name="Chaumot A."/>
            <person name="Denell R.E."/>
            <person name="Ferrier D.E."/>
            <person name="Friedrich M."/>
            <person name="Gordon C.M."/>
            <person name="Jindra M."/>
            <person name="Klingler M."/>
            <person name="Lan Q."/>
            <person name="Lattorff H.M."/>
            <person name="Laudet V."/>
            <person name="von Levetsow C."/>
            <person name="Liu Z."/>
            <person name="Lutz R."/>
            <person name="Lynch J.A."/>
            <person name="da Fonseca R.N."/>
            <person name="Posnien N."/>
            <person name="Reuter R."/>
            <person name="Roth S."/>
            <person name="Savard J."/>
            <person name="Schinko J.B."/>
            <person name="Schmitt C."/>
            <person name="Schoppmeier M."/>
            <person name="Schroder R."/>
            <person name="Shippy T.D."/>
            <person name="Simonnet F."/>
            <person name="Marques-Souza H."/>
            <person name="Tautz D."/>
            <person name="Tomoyasu Y."/>
            <person name="Trauner J."/>
            <person name="Van der Zee M."/>
            <person name="Vervoort M."/>
            <person name="Wittkopp N."/>
            <person name="Wimmer E.A."/>
            <person name="Yang X."/>
            <person name="Jones A.K."/>
            <person name="Sattelle D.B."/>
            <person name="Ebert P.R."/>
            <person name="Nelson D."/>
            <person name="Scott J.G."/>
            <person name="Beeman R.W."/>
            <person name="Muthukrishnan S."/>
            <person name="Kramer K.J."/>
            <person name="Arakane Y."/>
            <person name="Beeman R.W."/>
            <person name="Zhu Q."/>
            <person name="Hogenkamp D."/>
            <person name="Dixit R."/>
            <person name="Oppert B."/>
            <person name="Jiang H."/>
            <person name="Zou Z."/>
            <person name="Marshall J."/>
            <person name="Elpidina E."/>
            <person name="Vinokurov K."/>
            <person name="Oppert C."/>
            <person name="Zou Z."/>
            <person name="Evans J."/>
            <person name="Lu Z."/>
            <person name="Zhao P."/>
            <person name="Sumathipala N."/>
            <person name="Altincicek B."/>
            <person name="Vilcinskas A."/>
            <person name="Williams M."/>
            <person name="Hultmark D."/>
            <person name="Hetru C."/>
            <person name="Jiang H."/>
            <person name="Grimmelikhuijzen C.J."/>
            <person name="Hauser F."/>
            <person name="Cazzamali G."/>
            <person name="Williamson M."/>
            <person name="Park Y."/>
            <person name="Li B."/>
            <person name="Tanaka Y."/>
            <person name="Predel R."/>
            <person name="Neupert S."/>
            <person name="Schachtner J."/>
            <person name="Verleyen P."/>
            <person name="Raible F."/>
            <person name="Bork P."/>
            <person name="Friedrich M."/>
            <person name="Walden K.K."/>
            <person name="Robertson H.M."/>
            <person name="Angeli S."/>
            <person name="Foret S."/>
            <person name="Bucher G."/>
            <person name="Schuetz S."/>
            <person name="Maleszka R."/>
            <person name="Wimmer E.A."/>
            <person name="Beeman R.W."/>
            <person name="Lorenzen M."/>
            <person name="Tomoyasu Y."/>
            <person name="Miller S.C."/>
            <person name="Grossmann D."/>
            <person name="Bucher G."/>
        </authorList>
    </citation>
    <scope>NUCLEOTIDE SEQUENCE [LARGE SCALE GENOMIC DNA]</scope>
    <source>
        <strain evidence="11 12">Georgia GA2</strain>
    </source>
</reference>
<reference evidence="11 12" key="3">
    <citation type="journal article" date="2010" name="Nucleic Acids Res.">
        <title>BeetleBase in 2010: revisions to provide comprehensive genomic information for Tribolium castaneum.</title>
        <authorList>
            <person name="Kim H.S."/>
            <person name="Murphy T."/>
            <person name="Xia J."/>
            <person name="Caragea D."/>
            <person name="Park Y."/>
            <person name="Beeman R.W."/>
            <person name="Lorenzen M.D."/>
            <person name="Butcher S."/>
            <person name="Manak J.R."/>
            <person name="Brown S.J."/>
        </authorList>
    </citation>
    <scope>GENOME REANNOTATION</scope>
    <source>
        <strain evidence="11 12">Georgia GA2</strain>
    </source>
</reference>
<protein>
    <recommendedName>
        <fullName evidence="8">Juvenile hormone esterase</fullName>
        <shortName evidence="8">JHE</shortName>
        <ecNumber evidence="7">3.1.1.59</ecNumber>
    </recommendedName>
</protein>
<proteinExistence type="evidence at protein level"/>